<organism>
    <name type="scientific">Ruegeria pomeroyi (strain ATCC 700808 / DSM 15171 / DSS-3)</name>
    <name type="common">Silicibacter pomeroyi</name>
    <dbReference type="NCBI Taxonomy" id="246200"/>
    <lineage>
        <taxon>Bacteria</taxon>
        <taxon>Pseudomonadati</taxon>
        <taxon>Pseudomonadota</taxon>
        <taxon>Alphaproteobacteria</taxon>
        <taxon>Rhodobacterales</taxon>
        <taxon>Roseobacteraceae</taxon>
        <taxon>Ruegeria</taxon>
    </lineage>
</organism>
<evidence type="ECO:0000255" key="1">
    <source>
        <dbReference type="HAMAP-Rule" id="MF_01310"/>
    </source>
</evidence>
<evidence type="ECO:0000305" key="2"/>
<dbReference type="EMBL" id="CP000031">
    <property type="protein sequence ID" value="AAV93827.1"/>
    <property type="molecule type" value="Genomic_DNA"/>
</dbReference>
<dbReference type="RefSeq" id="WP_011046269.1">
    <property type="nucleotide sequence ID" value="NC_003911.12"/>
</dbReference>
<dbReference type="SMR" id="Q5LW33"/>
<dbReference type="STRING" id="246200.SPO0510"/>
<dbReference type="PaxDb" id="246200-SPO0510"/>
<dbReference type="KEGG" id="sil:SPO0510"/>
<dbReference type="eggNOG" id="COG0100">
    <property type="taxonomic scope" value="Bacteria"/>
</dbReference>
<dbReference type="HOGENOM" id="CLU_072439_5_0_5"/>
<dbReference type="OrthoDB" id="9806415at2"/>
<dbReference type="Proteomes" id="UP000001023">
    <property type="component" value="Chromosome"/>
</dbReference>
<dbReference type="GO" id="GO:1990904">
    <property type="term" value="C:ribonucleoprotein complex"/>
    <property type="evidence" value="ECO:0007669"/>
    <property type="project" value="UniProtKB-KW"/>
</dbReference>
<dbReference type="GO" id="GO:0005840">
    <property type="term" value="C:ribosome"/>
    <property type="evidence" value="ECO:0007669"/>
    <property type="project" value="UniProtKB-KW"/>
</dbReference>
<dbReference type="GO" id="GO:0019843">
    <property type="term" value="F:rRNA binding"/>
    <property type="evidence" value="ECO:0007669"/>
    <property type="project" value="UniProtKB-UniRule"/>
</dbReference>
<dbReference type="GO" id="GO:0003735">
    <property type="term" value="F:structural constituent of ribosome"/>
    <property type="evidence" value="ECO:0007669"/>
    <property type="project" value="InterPro"/>
</dbReference>
<dbReference type="GO" id="GO:0006412">
    <property type="term" value="P:translation"/>
    <property type="evidence" value="ECO:0007669"/>
    <property type="project" value="UniProtKB-UniRule"/>
</dbReference>
<dbReference type="FunFam" id="3.30.420.80:FF:000001">
    <property type="entry name" value="30S ribosomal protein S11"/>
    <property type="match status" value="1"/>
</dbReference>
<dbReference type="Gene3D" id="3.30.420.80">
    <property type="entry name" value="Ribosomal protein S11"/>
    <property type="match status" value="1"/>
</dbReference>
<dbReference type="HAMAP" id="MF_01310">
    <property type="entry name" value="Ribosomal_uS11"/>
    <property type="match status" value="1"/>
</dbReference>
<dbReference type="InterPro" id="IPR001971">
    <property type="entry name" value="Ribosomal_uS11"/>
</dbReference>
<dbReference type="InterPro" id="IPR019981">
    <property type="entry name" value="Ribosomal_uS11_bac-type"/>
</dbReference>
<dbReference type="InterPro" id="IPR018102">
    <property type="entry name" value="Ribosomal_uS11_CS"/>
</dbReference>
<dbReference type="InterPro" id="IPR036967">
    <property type="entry name" value="Ribosomal_uS11_sf"/>
</dbReference>
<dbReference type="NCBIfam" id="NF003698">
    <property type="entry name" value="PRK05309.1"/>
    <property type="match status" value="1"/>
</dbReference>
<dbReference type="NCBIfam" id="TIGR03632">
    <property type="entry name" value="uS11_bact"/>
    <property type="match status" value="1"/>
</dbReference>
<dbReference type="PANTHER" id="PTHR11759">
    <property type="entry name" value="40S RIBOSOMAL PROTEIN S14/30S RIBOSOMAL PROTEIN S11"/>
    <property type="match status" value="1"/>
</dbReference>
<dbReference type="Pfam" id="PF00411">
    <property type="entry name" value="Ribosomal_S11"/>
    <property type="match status" value="1"/>
</dbReference>
<dbReference type="PIRSF" id="PIRSF002131">
    <property type="entry name" value="Ribosomal_S11"/>
    <property type="match status" value="1"/>
</dbReference>
<dbReference type="SUPFAM" id="SSF53137">
    <property type="entry name" value="Translational machinery components"/>
    <property type="match status" value="1"/>
</dbReference>
<dbReference type="PROSITE" id="PS00054">
    <property type="entry name" value="RIBOSOMAL_S11"/>
    <property type="match status" value="1"/>
</dbReference>
<comment type="function">
    <text evidence="1">Located on the platform of the 30S subunit, it bridges several disparate RNA helices of the 16S rRNA. Forms part of the Shine-Dalgarno cleft in the 70S ribosome.</text>
</comment>
<comment type="subunit">
    <text evidence="1">Part of the 30S ribosomal subunit. Interacts with proteins S7 and S18. Binds to IF-3.</text>
</comment>
<comment type="similarity">
    <text evidence="1">Belongs to the universal ribosomal protein uS11 family.</text>
</comment>
<keyword id="KW-1185">Reference proteome</keyword>
<keyword id="KW-0687">Ribonucleoprotein</keyword>
<keyword id="KW-0689">Ribosomal protein</keyword>
<keyword id="KW-0694">RNA-binding</keyword>
<keyword id="KW-0699">rRNA-binding</keyword>
<reference key="1">
    <citation type="journal article" date="2004" name="Nature">
        <title>Genome sequence of Silicibacter pomeroyi reveals adaptations to the marine environment.</title>
        <authorList>
            <person name="Moran M.A."/>
            <person name="Buchan A."/>
            <person name="Gonzalez J.M."/>
            <person name="Heidelberg J.F."/>
            <person name="Whitman W.B."/>
            <person name="Kiene R.P."/>
            <person name="Henriksen J.R."/>
            <person name="King G.M."/>
            <person name="Belas R."/>
            <person name="Fuqua C."/>
            <person name="Brinkac L.M."/>
            <person name="Lewis M."/>
            <person name="Johri S."/>
            <person name="Weaver B."/>
            <person name="Pai G."/>
            <person name="Eisen J.A."/>
            <person name="Rahe E."/>
            <person name="Sheldon W.M."/>
            <person name="Ye W."/>
            <person name="Miller T.R."/>
            <person name="Carlton J."/>
            <person name="Rasko D.A."/>
            <person name="Paulsen I.T."/>
            <person name="Ren Q."/>
            <person name="Daugherty S.C."/>
            <person name="DeBoy R.T."/>
            <person name="Dodson R.J."/>
            <person name="Durkin A.S."/>
            <person name="Madupu R."/>
            <person name="Nelson W.C."/>
            <person name="Sullivan S.A."/>
            <person name="Rosovitz M.J."/>
            <person name="Haft D.H."/>
            <person name="Selengut J."/>
            <person name="Ward N."/>
        </authorList>
    </citation>
    <scope>NUCLEOTIDE SEQUENCE [LARGE SCALE GENOMIC DNA]</scope>
    <source>
        <strain>ATCC 700808 / DSM 15171 / DSS-3</strain>
    </source>
</reference>
<reference key="2">
    <citation type="journal article" date="2014" name="Stand. Genomic Sci.">
        <title>An updated genome annotation for the model marine bacterium Ruegeria pomeroyi DSS-3.</title>
        <authorList>
            <person name="Rivers A.R."/>
            <person name="Smith C.B."/>
            <person name="Moran M.A."/>
        </authorList>
    </citation>
    <scope>GENOME REANNOTATION</scope>
    <source>
        <strain>ATCC 700808 / DSM 15171 / DSS-3</strain>
    </source>
</reference>
<accession>Q5LW33</accession>
<feature type="chain" id="PRO_0000123217" description="Small ribosomal subunit protein uS11">
    <location>
        <begin position="1"/>
        <end position="130"/>
    </location>
</feature>
<name>RS11_RUEPO</name>
<sequence length="130" mass="13929">MARDKTRTTKKKERKNIASGVAHVNSTFNNTKILISDVQGNAISWSSAGTMGFKGSRKSTPYAAQLAAEDAGRKAQDHGVKTLEVEVQGPGSGRESALRALAAVGFNITSIRDVTPIAHNGCRPPKRRRV</sequence>
<gene>
    <name evidence="1" type="primary">rpsK</name>
    <name type="ordered locus">SPO0510</name>
</gene>
<protein>
    <recommendedName>
        <fullName evidence="1">Small ribosomal subunit protein uS11</fullName>
    </recommendedName>
    <alternativeName>
        <fullName evidence="2">30S ribosomal protein S11</fullName>
    </alternativeName>
</protein>
<proteinExistence type="inferred from homology"/>